<protein>
    <recommendedName>
        <fullName>Inositol oxygenase</fullName>
        <ecNumber>1.13.99.1</ecNumber>
    </recommendedName>
    <alternativeName>
        <fullName>Aldehyde reductase-like 6</fullName>
    </alternativeName>
    <alternativeName>
        <fullName>Myo-inositol oxygenase</fullName>
        <shortName>MI oxygenase</shortName>
    </alternativeName>
    <alternativeName>
        <fullName>Renal-specific oxidoreductase</fullName>
    </alternativeName>
</protein>
<organism>
    <name type="scientific">Mus musculus</name>
    <name type="common">Mouse</name>
    <dbReference type="NCBI Taxonomy" id="10090"/>
    <lineage>
        <taxon>Eukaryota</taxon>
        <taxon>Metazoa</taxon>
        <taxon>Chordata</taxon>
        <taxon>Craniata</taxon>
        <taxon>Vertebrata</taxon>
        <taxon>Euteleostomi</taxon>
        <taxon>Mammalia</taxon>
        <taxon>Eutheria</taxon>
        <taxon>Euarchontoglires</taxon>
        <taxon>Glires</taxon>
        <taxon>Rodentia</taxon>
        <taxon>Myomorpha</taxon>
        <taxon>Muroidea</taxon>
        <taxon>Muridae</taxon>
        <taxon>Murinae</taxon>
        <taxon>Mus</taxon>
        <taxon>Mus</taxon>
    </lineage>
</organism>
<gene>
    <name type="primary">Miox</name>
    <name type="synonym">Aldrl6</name>
    <name type="synonym">Rsor</name>
</gene>
<comment type="catalytic activity">
    <reaction>
        <text>myo-inositol + O2 = D-glucuronate + H2O + H(+)</text>
        <dbReference type="Rhea" id="RHEA:23696"/>
        <dbReference type="ChEBI" id="CHEBI:15377"/>
        <dbReference type="ChEBI" id="CHEBI:15378"/>
        <dbReference type="ChEBI" id="CHEBI:15379"/>
        <dbReference type="ChEBI" id="CHEBI:17268"/>
        <dbReference type="ChEBI" id="CHEBI:58720"/>
        <dbReference type="EC" id="1.13.99.1"/>
    </reaction>
</comment>
<comment type="cofactor">
    <cofactor evidence="4 5">
        <name>Fe cation</name>
        <dbReference type="ChEBI" id="CHEBI:24875"/>
    </cofactor>
    <text evidence="4 5">Binds 2 iron ions per subunit.</text>
</comment>
<comment type="pathway">
    <text>Polyol metabolism; myo-inositol degradation into D-glucuronate; D-glucuronate from myo-inositol: step 1/1.</text>
</comment>
<comment type="subcellular location">
    <subcellularLocation>
        <location evidence="1">Cytoplasm</location>
    </subcellularLocation>
</comment>
<comment type="tissue specificity">
    <text evidence="3">Kidney specific. Renal proximal tubules.</text>
</comment>
<comment type="similarity">
    <text evidence="6">Belongs to the myo-inositol oxygenase family.</text>
</comment>
<dbReference type="EC" id="1.13.99.1"/>
<dbReference type="EMBL" id="AF197127">
    <property type="protein sequence ID" value="AAF25202.1"/>
    <property type="molecule type" value="mRNA"/>
</dbReference>
<dbReference type="EMBL" id="AY738257">
    <property type="protein sequence ID" value="AAV65815.1"/>
    <property type="molecule type" value="mRNA"/>
</dbReference>
<dbReference type="EMBL" id="BC013543">
    <property type="protein sequence ID" value="AAH13543.1"/>
    <property type="molecule type" value="mRNA"/>
</dbReference>
<dbReference type="CCDS" id="CCDS27745.1"/>
<dbReference type="RefSeq" id="NP_064361.2">
    <property type="nucleotide sequence ID" value="NM_019977.2"/>
</dbReference>
<dbReference type="PDB" id="2HUO">
    <property type="method" value="X-ray"/>
    <property type="resolution" value="2.00 A"/>
    <property type="chains" value="A=1-285"/>
</dbReference>
<dbReference type="PDB" id="3BXD">
    <property type="method" value="X-ray"/>
    <property type="resolution" value="2.00 A"/>
    <property type="chains" value="A=1-285"/>
</dbReference>
<dbReference type="PDBsum" id="2HUO"/>
<dbReference type="PDBsum" id="3BXD"/>
<dbReference type="SMR" id="Q9QXN5"/>
<dbReference type="FunCoup" id="Q9QXN5">
    <property type="interactions" value="624"/>
</dbReference>
<dbReference type="STRING" id="10090.ENSMUSP00000023282"/>
<dbReference type="GlyGen" id="Q9QXN5">
    <property type="glycosylation" value="1 site, 1 O-linked glycan (1 site)"/>
</dbReference>
<dbReference type="iPTMnet" id="Q9QXN5"/>
<dbReference type="PhosphoSitePlus" id="Q9QXN5"/>
<dbReference type="REPRODUCTION-2DPAGE" id="Q9QXN5"/>
<dbReference type="jPOST" id="Q9QXN5"/>
<dbReference type="PaxDb" id="10090-ENSMUSP00000023282"/>
<dbReference type="PeptideAtlas" id="Q9QXN5"/>
<dbReference type="ProteomicsDB" id="295612"/>
<dbReference type="Antibodypedia" id="53923">
    <property type="antibodies" value="322 antibodies from 21 providers"/>
</dbReference>
<dbReference type="DNASU" id="56727"/>
<dbReference type="Ensembl" id="ENSMUST00000023282.9">
    <property type="protein sequence ID" value="ENSMUSP00000023282.3"/>
    <property type="gene ID" value="ENSMUSG00000022613.9"/>
</dbReference>
<dbReference type="GeneID" id="56727"/>
<dbReference type="KEGG" id="mmu:56727"/>
<dbReference type="UCSC" id="uc007xgc.1">
    <property type="organism name" value="mouse"/>
</dbReference>
<dbReference type="AGR" id="MGI:1891725"/>
<dbReference type="CTD" id="55586"/>
<dbReference type="MGI" id="MGI:1891725">
    <property type="gene designation" value="Miox"/>
</dbReference>
<dbReference type="VEuPathDB" id="HostDB:ENSMUSG00000022613"/>
<dbReference type="eggNOG" id="KOG1573">
    <property type="taxonomic scope" value="Eukaryota"/>
</dbReference>
<dbReference type="GeneTree" id="ENSGT00390000016211"/>
<dbReference type="HOGENOM" id="CLU_050259_1_0_1"/>
<dbReference type="InParanoid" id="Q9QXN5"/>
<dbReference type="OMA" id="RYNTKYG"/>
<dbReference type="OrthoDB" id="5151075at2759"/>
<dbReference type="PhylomeDB" id="Q9QXN5"/>
<dbReference type="TreeFam" id="TF300089"/>
<dbReference type="BRENDA" id="1.13.99.1">
    <property type="organism ID" value="3474"/>
</dbReference>
<dbReference type="Reactome" id="R-MMU-1855183">
    <property type="pathway name" value="Synthesis of IP2, IP, and Ins in the cytosol"/>
</dbReference>
<dbReference type="SABIO-RK" id="Q9QXN5"/>
<dbReference type="UniPathway" id="UPA00111">
    <property type="reaction ID" value="UER00527"/>
</dbReference>
<dbReference type="BioGRID-ORCS" id="56727">
    <property type="hits" value="0 hits in 80 CRISPR screens"/>
</dbReference>
<dbReference type="ChiTaRS" id="Miox">
    <property type="organism name" value="mouse"/>
</dbReference>
<dbReference type="EvolutionaryTrace" id="Q9QXN5"/>
<dbReference type="PRO" id="PR:Q9QXN5"/>
<dbReference type="Proteomes" id="UP000000589">
    <property type="component" value="Chromosome 15"/>
</dbReference>
<dbReference type="RNAct" id="Q9QXN5">
    <property type="molecule type" value="protein"/>
</dbReference>
<dbReference type="Bgee" id="ENSMUSG00000022613">
    <property type="expression patterns" value="Expressed in right kidney and 56 other cell types or tissues"/>
</dbReference>
<dbReference type="ExpressionAtlas" id="Q9QXN5">
    <property type="expression patterns" value="baseline and differential"/>
</dbReference>
<dbReference type="GO" id="GO:0005737">
    <property type="term" value="C:cytoplasm"/>
    <property type="evidence" value="ECO:0000314"/>
    <property type="project" value="UniProtKB"/>
</dbReference>
<dbReference type="GO" id="GO:0016234">
    <property type="term" value="C:inclusion body"/>
    <property type="evidence" value="ECO:0000250"/>
    <property type="project" value="UniProtKB"/>
</dbReference>
<dbReference type="GO" id="GO:0004033">
    <property type="term" value="F:aldo-keto reductase (NADPH) activity"/>
    <property type="evidence" value="ECO:0000314"/>
    <property type="project" value="UniProtKB"/>
</dbReference>
<dbReference type="GO" id="GO:0008199">
    <property type="term" value="F:ferric iron binding"/>
    <property type="evidence" value="ECO:0000250"/>
    <property type="project" value="UniProtKB"/>
</dbReference>
<dbReference type="GO" id="GO:0050113">
    <property type="term" value="F:inositol oxygenase activity"/>
    <property type="evidence" value="ECO:0000250"/>
    <property type="project" value="UniProtKB"/>
</dbReference>
<dbReference type="GO" id="GO:0016491">
    <property type="term" value="F:oxidoreductase activity"/>
    <property type="evidence" value="ECO:0000304"/>
    <property type="project" value="MGI"/>
</dbReference>
<dbReference type="GO" id="GO:0016651">
    <property type="term" value="F:oxidoreductase activity, acting on NAD(P)H"/>
    <property type="evidence" value="ECO:0000314"/>
    <property type="project" value="UniProtKB"/>
</dbReference>
<dbReference type="GO" id="GO:0019310">
    <property type="term" value="P:inositol catabolic process"/>
    <property type="evidence" value="ECO:0000250"/>
    <property type="project" value="UniProtKB"/>
</dbReference>
<dbReference type="DisProt" id="DP02837"/>
<dbReference type="InterPro" id="IPR018170">
    <property type="entry name" value="Aldo/ket_reductase_CS"/>
</dbReference>
<dbReference type="InterPro" id="IPR007828">
    <property type="entry name" value="Inositol_oxygenase"/>
</dbReference>
<dbReference type="PANTHER" id="PTHR12588:SF0">
    <property type="entry name" value="INOSITOL OXYGENASE"/>
    <property type="match status" value="1"/>
</dbReference>
<dbReference type="PANTHER" id="PTHR12588">
    <property type="entry name" value="MYOINOSITOL OXYGENASE"/>
    <property type="match status" value="1"/>
</dbReference>
<dbReference type="Pfam" id="PF05153">
    <property type="entry name" value="MIOX"/>
    <property type="match status" value="1"/>
</dbReference>
<dbReference type="SUPFAM" id="SSF109604">
    <property type="entry name" value="HD-domain/PDEase-like"/>
    <property type="match status" value="1"/>
</dbReference>
<dbReference type="PROSITE" id="PS00063">
    <property type="entry name" value="ALDOKETO_REDUCTASE_3"/>
    <property type="match status" value="1"/>
</dbReference>
<reference key="1">
    <citation type="journal article" date="2000" name="Proc. Natl. Acad. Sci. U.S.A.">
        <title>Identification of a renal-specific oxido-reductase in newborn diabetic mice.</title>
        <authorList>
            <person name="Yang Q."/>
            <person name="Dixit B."/>
            <person name="Wada J."/>
            <person name="Tian Y."/>
            <person name="Wallner E.I."/>
            <person name="Srivastva S.K."/>
            <person name="Kanwar Y.S."/>
        </authorList>
    </citation>
    <scope>NUCLEOTIDE SEQUENCE [MRNA]</scope>
    <scope>TISSUE SPECIFICITY</scope>
    <source>
        <tissue>Kidney</tissue>
    </source>
</reference>
<reference key="2">
    <citation type="journal article" date="2004" name="Biochem. Biophys. Res. Commun.">
        <title>Molecular cloning, expression, and characterization of myo-inositol oxygenase from mouse, rat, and human kidney.</title>
        <authorList>
            <person name="Arner R.J."/>
            <person name="Prabhu K.S."/>
            <person name="Reddy C.C."/>
        </authorList>
    </citation>
    <scope>NUCLEOTIDE SEQUENCE [MRNA]</scope>
    <source>
        <strain>C57BL/6J</strain>
        <tissue>Kidney</tissue>
    </source>
</reference>
<reference key="3">
    <citation type="journal article" date="2004" name="Genome Res.">
        <title>The status, quality, and expansion of the NIH full-length cDNA project: the Mammalian Gene Collection (MGC).</title>
        <authorList>
            <consortium name="The MGC Project Team"/>
        </authorList>
    </citation>
    <scope>NUCLEOTIDE SEQUENCE [LARGE SCALE MRNA]</scope>
    <source>
        <tissue>Kidney</tissue>
    </source>
</reference>
<reference key="4">
    <citation type="journal article" date="2010" name="Cell">
        <title>A tissue-specific atlas of mouse protein phosphorylation and expression.</title>
        <authorList>
            <person name="Huttlin E.L."/>
            <person name="Jedrychowski M.P."/>
            <person name="Elias J.E."/>
            <person name="Goswami T."/>
            <person name="Rad R."/>
            <person name="Beausoleil S.A."/>
            <person name="Villen J."/>
            <person name="Haas W."/>
            <person name="Sowa M.E."/>
            <person name="Gygi S.P."/>
        </authorList>
    </citation>
    <scope>IDENTIFICATION BY MASS SPECTROMETRY [LARGE SCALE ANALYSIS]</scope>
    <source>
        <tissue>Kidney</tissue>
    </source>
</reference>
<reference key="5">
    <citation type="journal article" date="2006" name="Proc. Natl. Acad. Sci. U.S.A.">
        <title>Crystal structure of a substrate complex of myo-inositol oxygenase, a di-iron oxygenase with a key role in inositol metabolism.</title>
        <authorList>
            <person name="Brown P.M."/>
            <person name="Caradoc-Davies T.T."/>
            <person name="Dickson J.M."/>
            <person name="Cooper G.J."/>
            <person name="Loomes K.M."/>
            <person name="Baker E.N."/>
        </authorList>
    </citation>
    <scope>X-RAY CRYSTALLOGRAPHY (2.0 ANGSTROMS) IN COMPLEX WITH IRON AND MYO-INOSITOL</scope>
    <scope>COFACTOR</scope>
</reference>
<reference key="6">
    <citation type="journal article" date="2008" name="J. Biol. Chem.">
        <title>Structural and biophysical characterization of human myo-inositol oxygenase.</title>
        <authorList>
            <person name="Thorsell A.G."/>
            <person name="Persson C."/>
            <person name="Voevodskaya N."/>
            <person name="Busam R.D."/>
            <person name="Hammarstrom M."/>
            <person name="Graslund S."/>
            <person name="Graslund A."/>
            <person name="Hallberg B.M."/>
        </authorList>
    </citation>
    <scope>X-RAY CRYSTALLOGRAPHY (2.0 ANGSTROMS) IN COMPLEX WITH IRON AND MYO-INOSITOL</scope>
    <scope>COFACTOR</scope>
</reference>
<accession>Q9QXN5</accession>
<accession>Q5S8D0</accession>
<accession>Q91WQ8</accession>
<keyword id="KW-0002">3D-structure</keyword>
<keyword id="KW-0963">Cytoplasm</keyword>
<keyword id="KW-0408">Iron</keyword>
<keyword id="KW-0479">Metal-binding</keyword>
<keyword id="KW-0560">Oxidoreductase</keyword>
<keyword id="KW-0597">Phosphoprotein</keyword>
<keyword id="KW-1185">Reference proteome</keyword>
<name>MIOX_MOUSE</name>
<proteinExistence type="evidence at protein level"/>
<evidence type="ECO:0000250" key="1"/>
<evidence type="ECO:0000250" key="2">
    <source>
        <dbReference type="UniProtKB" id="Q9QXN4"/>
    </source>
</evidence>
<evidence type="ECO:0000269" key="3">
    <source>
    </source>
</evidence>
<evidence type="ECO:0000269" key="4">
    <source>
    </source>
</evidence>
<evidence type="ECO:0000269" key="5">
    <source>
    </source>
</evidence>
<evidence type="ECO:0000305" key="6"/>
<evidence type="ECO:0007829" key="7">
    <source>
        <dbReference type="PDB" id="2HUO"/>
    </source>
</evidence>
<feature type="chain" id="PRO_0000079149" description="Inositol oxygenase">
    <location>
        <begin position="1"/>
        <end position="285"/>
    </location>
</feature>
<feature type="binding site">
    <location>
        <position position="29"/>
    </location>
    <ligand>
        <name>substrate</name>
    </ligand>
</feature>
<feature type="binding site">
    <location>
        <begin position="85"/>
        <end position="88"/>
    </location>
    <ligand>
        <name>substrate</name>
    </ligand>
</feature>
<feature type="binding site" evidence="4 5">
    <location>
        <position position="98"/>
    </location>
    <ligand>
        <name>Fe cation</name>
        <dbReference type="ChEBI" id="CHEBI:24875"/>
        <label>1</label>
    </ligand>
</feature>
<feature type="binding site" evidence="4 5">
    <location>
        <position position="123"/>
    </location>
    <ligand>
        <name>Fe cation</name>
        <dbReference type="ChEBI" id="CHEBI:24875"/>
        <label>1</label>
    </ligand>
</feature>
<feature type="binding site" evidence="4 5">
    <location>
        <position position="124"/>
    </location>
    <ligand>
        <name>Fe cation</name>
        <dbReference type="ChEBI" id="CHEBI:24875"/>
        <label>1</label>
    </ligand>
</feature>
<feature type="binding site" evidence="4 5">
    <location>
        <position position="124"/>
    </location>
    <ligand>
        <name>Fe cation</name>
        <dbReference type="ChEBI" id="CHEBI:24875"/>
        <label>2</label>
    </ligand>
</feature>
<feature type="binding site">
    <location>
        <position position="127"/>
    </location>
    <ligand>
        <name>substrate</name>
    </ligand>
</feature>
<feature type="binding site">
    <location>
        <begin position="141"/>
        <end position="142"/>
    </location>
    <ligand>
        <name>substrate</name>
    </ligand>
</feature>
<feature type="binding site" evidence="4 5">
    <location>
        <position position="194"/>
    </location>
    <ligand>
        <name>Fe cation</name>
        <dbReference type="ChEBI" id="CHEBI:24875"/>
        <label>2</label>
    </ligand>
</feature>
<feature type="binding site">
    <location>
        <begin position="220"/>
        <end position="221"/>
    </location>
    <ligand>
        <name>substrate</name>
    </ligand>
</feature>
<feature type="binding site" evidence="4 5">
    <location>
        <position position="220"/>
    </location>
    <ligand>
        <name>Fe cation</name>
        <dbReference type="ChEBI" id="CHEBI:24875"/>
        <label>2</label>
    </ligand>
</feature>
<feature type="binding site" evidence="4 5">
    <location>
        <position position="253"/>
    </location>
    <ligand>
        <name>Fe cation</name>
        <dbReference type="ChEBI" id="CHEBI:24875"/>
        <label>1</label>
    </ligand>
</feature>
<feature type="modified residue" description="Phosphoserine" evidence="2">
    <location>
        <position position="33"/>
    </location>
</feature>
<feature type="sequence conflict" description="In Ref. 1; AAF25202." evidence="6" ref="1">
    <original>S</original>
    <variation>G</variation>
    <location>
        <position position="65"/>
    </location>
</feature>
<feature type="strand" evidence="7">
    <location>
        <begin position="31"/>
        <end position="33"/>
    </location>
</feature>
<feature type="helix" evidence="7">
    <location>
        <begin position="37"/>
        <end position="50"/>
    </location>
</feature>
<feature type="helix" evidence="7">
    <location>
        <begin position="53"/>
        <end position="63"/>
    </location>
</feature>
<feature type="helix" evidence="7">
    <location>
        <begin position="73"/>
        <end position="79"/>
    </location>
</feature>
<feature type="helix" evidence="7">
    <location>
        <begin position="80"/>
        <end position="82"/>
    </location>
</feature>
<feature type="helix" evidence="7">
    <location>
        <begin position="95"/>
        <end position="109"/>
    </location>
</feature>
<feature type="helix" evidence="7">
    <location>
        <begin position="114"/>
        <end position="122"/>
    </location>
</feature>
<feature type="helix" evidence="7">
    <location>
        <begin position="125"/>
        <end position="132"/>
    </location>
</feature>
<feature type="helix" evidence="7">
    <location>
        <begin position="136"/>
        <end position="138"/>
    </location>
</feature>
<feature type="strand" evidence="7">
    <location>
        <begin position="145"/>
        <end position="148"/>
    </location>
</feature>
<feature type="turn" evidence="7">
    <location>
        <begin position="155"/>
        <end position="159"/>
    </location>
</feature>
<feature type="helix" evidence="7">
    <location>
        <begin position="165"/>
        <end position="168"/>
    </location>
</feature>
<feature type="turn" evidence="7">
    <location>
        <begin position="170"/>
        <end position="172"/>
    </location>
</feature>
<feature type="strand" evidence="7">
    <location>
        <begin position="173"/>
        <end position="176"/>
    </location>
</feature>
<feature type="helix" evidence="7">
    <location>
        <begin position="185"/>
        <end position="187"/>
    </location>
</feature>
<feature type="helix" evidence="7">
    <location>
        <begin position="194"/>
        <end position="204"/>
    </location>
</feature>
<feature type="helix" evidence="7">
    <location>
        <begin position="211"/>
        <end position="219"/>
    </location>
</feature>
<feature type="helix" evidence="7">
    <location>
        <begin position="223"/>
        <end position="226"/>
    </location>
</feature>
<feature type="turn" evidence="7">
    <location>
        <begin position="232"/>
        <end position="234"/>
    </location>
</feature>
<feature type="helix" evidence="7">
    <location>
        <begin position="237"/>
        <end position="255"/>
    </location>
</feature>
<feature type="helix" evidence="7">
    <location>
        <begin position="264"/>
        <end position="278"/>
    </location>
</feature>
<sequence>MKVDVGPDPSLVYRPDVDPEMAKSKDSFRNYTSGPLLDRVFTTYKLMHTHQTVDFVSRKRIQYGSFSYKKMTIMEAVGMLDDLVDESDPDVDFPNSFHAFQTAEGIRKAHPDKDWFHLVGLLHDLGKIMALWGEPQWAVVGDTFPVGCRPQASVVFCDSTFQDNPDLQDPRYSTELGMYQPHCGLENVLMSWGHDEYLYQMMKFNKFSLPSEAFYMIRFHSFYPWHTGGDYRQLCSQQDLDMLPWVQEFNKFDLYTKCPDLPDVESLRPYYQGLIDKYCPGTLSW</sequence>